<comment type="function">
    <text evidence="1">NDH-1 shuttles electrons from NADH, via FMN and iron-sulfur (Fe-S) centers, to quinones in the respiratory chain. The immediate electron acceptor for the enzyme in this species is believed to be ubiquinone. Couples the redox reaction to proton translocation (for every two electrons transferred, four hydrogen ions are translocated across the cytoplasmic membrane), and thus conserves the redox energy in a proton gradient.</text>
</comment>
<comment type="catalytic activity">
    <reaction evidence="1">
        <text>a quinone + NADH + 5 H(+)(in) = a quinol + NAD(+) + 4 H(+)(out)</text>
        <dbReference type="Rhea" id="RHEA:57888"/>
        <dbReference type="ChEBI" id="CHEBI:15378"/>
        <dbReference type="ChEBI" id="CHEBI:24646"/>
        <dbReference type="ChEBI" id="CHEBI:57540"/>
        <dbReference type="ChEBI" id="CHEBI:57945"/>
        <dbReference type="ChEBI" id="CHEBI:132124"/>
    </reaction>
</comment>
<comment type="subunit">
    <text evidence="1">NDH-1 is composed of 14 different subunits. Subunits NuoA, H, J, K, L, M, N constitute the membrane sector of the complex.</text>
</comment>
<comment type="subcellular location">
    <subcellularLocation>
        <location evidence="1">Cell inner membrane</location>
        <topology evidence="1">Multi-pass membrane protein</topology>
    </subcellularLocation>
</comment>
<comment type="similarity">
    <text evidence="1">Belongs to the complex I subunit 4L family.</text>
</comment>
<accession>B2IHV6</accession>
<keyword id="KW-0997">Cell inner membrane</keyword>
<keyword id="KW-1003">Cell membrane</keyword>
<keyword id="KW-0472">Membrane</keyword>
<keyword id="KW-0520">NAD</keyword>
<keyword id="KW-0874">Quinone</keyword>
<keyword id="KW-1185">Reference proteome</keyword>
<keyword id="KW-1278">Translocase</keyword>
<keyword id="KW-0812">Transmembrane</keyword>
<keyword id="KW-1133">Transmembrane helix</keyword>
<keyword id="KW-0813">Transport</keyword>
<keyword id="KW-0830">Ubiquinone</keyword>
<gene>
    <name evidence="1" type="primary">nuoK</name>
    <name type="ordered locus">Bind_2388</name>
</gene>
<dbReference type="EC" id="7.1.1.-" evidence="1"/>
<dbReference type="EMBL" id="CP001016">
    <property type="protein sequence ID" value="ACB95999.1"/>
    <property type="molecule type" value="Genomic_DNA"/>
</dbReference>
<dbReference type="RefSeq" id="WP_012385352.1">
    <property type="nucleotide sequence ID" value="NC_010581.1"/>
</dbReference>
<dbReference type="SMR" id="B2IHV6"/>
<dbReference type="STRING" id="395963.Bind_2388"/>
<dbReference type="KEGG" id="bid:Bind_2388"/>
<dbReference type="eggNOG" id="COG0713">
    <property type="taxonomic scope" value="Bacteria"/>
</dbReference>
<dbReference type="HOGENOM" id="CLU_144724_2_0_5"/>
<dbReference type="Proteomes" id="UP000001695">
    <property type="component" value="Chromosome"/>
</dbReference>
<dbReference type="GO" id="GO:0030964">
    <property type="term" value="C:NADH dehydrogenase complex"/>
    <property type="evidence" value="ECO:0007669"/>
    <property type="project" value="TreeGrafter"/>
</dbReference>
<dbReference type="GO" id="GO:0005886">
    <property type="term" value="C:plasma membrane"/>
    <property type="evidence" value="ECO:0007669"/>
    <property type="project" value="UniProtKB-SubCell"/>
</dbReference>
<dbReference type="GO" id="GO:0050136">
    <property type="term" value="F:NADH:ubiquinone reductase (non-electrogenic) activity"/>
    <property type="evidence" value="ECO:0007669"/>
    <property type="project" value="UniProtKB-UniRule"/>
</dbReference>
<dbReference type="GO" id="GO:0048038">
    <property type="term" value="F:quinone binding"/>
    <property type="evidence" value="ECO:0007669"/>
    <property type="project" value="UniProtKB-KW"/>
</dbReference>
<dbReference type="GO" id="GO:0042773">
    <property type="term" value="P:ATP synthesis coupled electron transport"/>
    <property type="evidence" value="ECO:0007669"/>
    <property type="project" value="InterPro"/>
</dbReference>
<dbReference type="FunFam" id="1.10.287.3510:FF:000001">
    <property type="entry name" value="NADH-quinone oxidoreductase subunit K"/>
    <property type="match status" value="1"/>
</dbReference>
<dbReference type="Gene3D" id="1.10.287.3510">
    <property type="match status" value="1"/>
</dbReference>
<dbReference type="HAMAP" id="MF_01456">
    <property type="entry name" value="NDH1_NuoK"/>
    <property type="match status" value="1"/>
</dbReference>
<dbReference type="InterPro" id="IPR001133">
    <property type="entry name" value="NADH_UbQ_OxRdtase_chain4L/K"/>
</dbReference>
<dbReference type="InterPro" id="IPR039428">
    <property type="entry name" value="NUOK/Mnh_C1-like"/>
</dbReference>
<dbReference type="NCBIfam" id="NF004320">
    <property type="entry name" value="PRK05715.1-2"/>
    <property type="match status" value="1"/>
</dbReference>
<dbReference type="NCBIfam" id="NF004321">
    <property type="entry name" value="PRK05715.1-3"/>
    <property type="match status" value="1"/>
</dbReference>
<dbReference type="NCBIfam" id="NF004323">
    <property type="entry name" value="PRK05715.1-5"/>
    <property type="match status" value="1"/>
</dbReference>
<dbReference type="PANTHER" id="PTHR11434:SF21">
    <property type="entry name" value="NADH DEHYDROGENASE SUBUNIT 4L-RELATED"/>
    <property type="match status" value="1"/>
</dbReference>
<dbReference type="PANTHER" id="PTHR11434">
    <property type="entry name" value="NADH-UBIQUINONE OXIDOREDUCTASE SUBUNIT ND4L"/>
    <property type="match status" value="1"/>
</dbReference>
<dbReference type="Pfam" id="PF00420">
    <property type="entry name" value="Oxidored_q2"/>
    <property type="match status" value="1"/>
</dbReference>
<proteinExistence type="inferred from homology"/>
<protein>
    <recommendedName>
        <fullName evidence="1">NADH-quinone oxidoreductase subunit K</fullName>
        <ecNumber evidence="1">7.1.1.-</ecNumber>
    </recommendedName>
    <alternativeName>
        <fullName evidence="1">NADH dehydrogenase I subunit K</fullName>
    </alternativeName>
    <alternativeName>
        <fullName evidence="1">NDH-1 subunit K</fullName>
    </alternativeName>
</protein>
<feature type="chain" id="PRO_0000389958" description="NADH-quinone oxidoreductase subunit K">
    <location>
        <begin position="1"/>
        <end position="102"/>
    </location>
</feature>
<feature type="transmembrane region" description="Helical" evidence="1">
    <location>
        <begin position="5"/>
        <end position="25"/>
    </location>
</feature>
<feature type="transmembrane region" description="Helical" evidence="1">
    <location>
        <begin position="30"/>
        <end position="50"/>
    </location>
</feature>
<feature type="transmembrane region" description="Helical" evidence="1">
    <location>
        <begin position="62"/>
        <end position="82"/>
    </location>
</feature>
<name>NUOK_BEII9</name>
<reference key="1">
    <citation type="journal article" date="2010" name="J. Bacteriol.">
        <title>Complete genome sequence of Beijerinckia indica subsp. indica.</title>
        <authorList>
            <person name="Tamas I."/>
            <person name="Dedysh S.N."/>
            <person name="Liesack W."/>
            <person name="Stott M.B."/>
            <person name="Alam M."/>
            <person name="Murrell J.C."/>
            <person name="Dunfield P.F."/>
        </authorList>
    </citation>
    <scope>NUCLEOTIDE SEQUENCE [LARGE SCALE GENOMIC DNA]</scope>
    <source>
        <strain>ATCC 9039 / DSM 1715 / NCIMB 8712</strain>
    </source>
</reference>
<organism>
    <name type="scientific">Beijerinckia indica subsp. indica (strain ATCC 9039 / DSM 1715 / NCIMB 8712)</name>
    <dbReference type="NCBI Taxonomy" id="395963"/>
    <lineage>
        <taxon>Bacteria</taxon>
        <taxon>Pseudomonadati</taxon>
        <taxon>Pseudomonadota</taxon>
        <taxon>Alphaproteobacteria</taxon>
        <taxon>Hyphomicrobiales</taxon>
        <taxon>Beijerinckiaceae</taxon>
        <taxon>Beijerinckia</taxon>
    </lineage>
</organism>
<sequence length="102" mass="10887">MTVPLTQYLLVAAILFTIGVAGIILNRKNIIIILMSVELILLSVNLNLVAFSASLGDLTGQIFALFILTVAAAEAAIGLAILVTFYRNRGSIAVEDIHMMKG</sequence>
<evidence type="ECO:0000255" key="1">
    <source>
        <dbReference type="HAMAP-Rule" id="MF_01456"/>
    </source>
</evidence>